<dbReference type="EMBL" id="AE014134">
    <property type="protein sequence ID" value="AAF52893.3"/>
    <property type="molecule type" value="Genomic_DNA"/>
</dbReference>
<dbReference type="EMBL" id="AY058665">
    <property type="protein sequence ID" value="AAL13894.1"/>
    <property type="molecule type" value="mRNA"/>
</dbReference>
<dbReference type="RefSeq" id="NP_609365.3">
    <property type="nucleotide sequence ID" value="NM_135521.6"/>
</dbReference>
<dbReference type="BioGRID" id="60461">
    <property type="interactions" value="2"/>
</dbReference>
<dbReference type="ComplexPortal" id="CPX-2279">
    <property type="entry name" value="TRAPPIII complex"/>
</dbReference>
<dbReference type="FunCoup" id="Q95TN1">
    <property type="interactions" value="1080"/>
</dbReference>
<dbReference type="STRING" id="7227.FBpp0079574"/>
<dbReference type="PaxDb" id="7227-FBpp0079574"/>
<dbReference type="DNASU" id="34373"/>
<dbReference type="EnsemblMetazoa" id="FBtr0079984">
    <property type="protein sequence ID" value="FBpp0079574"/>
    <property type="gene ID" value="FBgn0032204"/>
</dbReference>
<dbReference type="GeneID" id="34373"/>
<dbReference type="KEGG" id="dme:Dmel_CG4953"/>
<dbReference type="UCSC" id="CG4953-RA">
    <property type="organism name" value="d. melanogaster"/>
</dbReference>
<dbReference type="AGR" id="FB:FBgn0032204"/>
<dbReference type="FlyBase" id="FBgn0032204">
    <property type="gene designation" value="CG4953"/>
</dbReference>
<dbReference type="VEuPathDB" id="VectorBase:FBgn0032204"/>
<dbReference type="eggNOG" id="KOG2625">
    <property type="taxonomic scope" value="Eukaryota"/>
</dbReference>
<dbReference type="GeneTree" id="ENSGT00390000015280"/>
<dbReference type="HOGENOM" id="CLU_027041_0_0_1"/>
<dbReference type="InParanoid" id="Q95TN1"/>
<dbReference type="OMA" id="YCIKPKP"/>
<dbReference type="OrthoDB" id="10250284at2759"/>
<dbReference type="PhylomeDB" id="Q95TN1"/>
<dbReference type="Reactome" id="R-DME-8876198">
    <property type="pathway name" value="RAB GEFs exchange GTP for GDP on RABs"/>
</dbReference>
<dbReference type="BioGRID-ORCS" id="34373">
    <property type="hits" value="0 hits in 1 CRISPR screen"/>
</dbReference>
<dbReference type="GenomeRNAi" id="34373"/>
<dbReference type="PRO" id="PR:Q95TN1"/>
<dbReference type="Proteomes" id="UP000000803">
    <property type="component" value="Chromosome 2L"/>
</dbReference>
<dbReference type="Bgee" id="FBgn0032204">
    <property type="expression patterns" value="Expressed in cleaving embryo and 54 other cell types or tissues"/>
</dbReference>
<dbReference type="GO" id="GO:0005794">
    <property type="term" value="C:Golgi apparatus"/>
    <property type="evidence" value="ECO:0000314"/>
    <property type="project" value="FlyBase"/>
</dbReference>
<dbReference type="GO" id="GO:1990072">
    <property type="term" value="C:TRAPPIII protein complex"/>
    <property type="evidence" value="ECO:0000314"/>
    <property type="project" value="FlyBase"/>
</dbReference>
<dbReference type="GO" id="GO:0048193">
    <property type="term" value="P:Golgi vesicle transport"/>
    <property type="evidence" value="ECO:0000305"/>
    <property type="project" value="FlyBase"/>
</dbReference>
<dbReference type="InterPro" id="IPR010378">
    <property type="entry name" value="TRAPPC13"/>
</dbReference>
<dbReference type="InterPro" id="IPR055428">
    <property type="entry name" value="TRAPPC13_C"/>
</dbReference>
<dbReference type="InterPro" id="IPR055429">
    <property type="entry name" value="TRAPPC13_M"/>
</dbReference>
<dbReference type="InterPro" id="IPR055427">
    <property type="entry name" value="TRAPPC13_N"/>
</dbReference>
<dbReference type="PANTHER" id="PTHR13134">
    <property type="entry name" value="TRAFFICKING PROTEIN PARTICLE COMPLEX SUBUNIT 13"/>
    <property type="match status" value="1"/>
</dbReference>
<dbReference type="PANTHER" id="PTHR13134:SF3">
    <property type="entry name" value="TRAFFICKING PROTEIN PARTICLE COMPLEX SUBUNIT 13"/>
    <property type="match status" value="1"/>
</dbReference>
<dbReference type="Pfam" id="PF23643">
    <property type="entry name" value="TRAPPC13_C"/>
    <property type="match status" value="1"/>
</dbReference>
<dbReference type="Pfam" id="PF23647">
    <property type="entry name" value="TRAPPC13_M"/>
    <property type="match status" value="1"/>
</dbReference>
<dbReference type="Pfam" id="PF06159">
    <property type="entry name" value="TRAPPC13_N"/>
    <property type="match status" value="1"/>
</dbReference>
<organism>
    <name type="scientific">Drosophila melanogaster</name>
    <name type="common">Fruit fly</name>
    <dbReference type="NCBI Taxonomy" id="7227"/>
    <lineage>
        <taxon>Eukaryota</taxon>
        <taxon>Metazoa</taxon>
        <taxon>Ecdysozoa</taxon>
        <taxon>Arthropoda</taxon>
        <taxon>Hexapoda</taxon>
        <taxon>Insecta</taxon>
        <taxon>Pterygota</taxon>
        <taxon>Neoptera</taxon>
        <taxon>Endopterygota</taxon>
        <taxon>Diptera</taxon>
        <taxon>Brachycera</taxon>
        <taxon>Muscomorpha</taxon>
        <taxon>Ephydroidea</taxon>
        <taxon>Drosophilidae</taxon>
        <taxon>Drosophila</taxon>
        <taxon>Sophophora</taxon>
    </lineage>
</organism>
<protein>
    <recommendedName>
        <fullName>Probable trafficking protein particle complex subunit 13 homolog</fullName>
    </recommendedName>
</protein>
<proteinExistence type="evidence at transcript level"/>
<reference key="1">
    <citation type="journal article" date="2000" name="Science">
        <title>The genome sequence of Drosophila melanogaster.</title>
        <authorList>
            <person name="Adams M.D."/>
            <person name="Celniker S.E."/>
            <person name="Holt R.A."/>
            <person name="Evans C.A."/>
            <person name="Gocayne J.D."/>
            <person name="Amanatides P.G."/>
            <person name="Scherer S.E."/>
            <person name="Li P.W."/>
            <person name="Hoskins R.A."/>
            <person name="Galle R.F."/>
            <person name="George R.A."/>
            <person name="Lewis S.E."/>
            <person name="Richards S."/>
            <person name="Ashburner M."/>
            <person name="Henderson S.N."/>
            <person name="Sutton G.G."/>
            <person name="Wortman J.R."/>
            <person name="Yandell M.D."/>
            <person name="Zhang Q."/>
            <person name="Chen L.X."/>
            <person name="Brandon R.C."/>
            <person name="Rogers Y.-H.C."/>
            <person name="Blazej R.G."/>
            <person name="Champe M."/>
            <person name="Pfeiffer B.D."/>
            <person name="Wan K.H."/>
            <person name="Doyle C."/>
            <person name="Baxter E.G."/>
            <person name="Helt G."/>
            <person name="Nelson C.R."/>
            <person name="Miklos G.L.G."/>
            <person name="Abril J.F."/>
            <person name="Agbayani A."/>
            <person name="An H.-J."/>
            <person name="Andrews-Pfannkoch C."/>
            <person name="Baldwin D."/>
            <person name="Ballew R.M."/>
            <person name="Basu A."/>
            <person name="Baxendale J."/>
            <person name="Bayraktaroglu L."/>
            <person name="Beasley E.M."/>
            <person name="Beeson K.Y."/>
            <person name="Benos P.V."/>
            <person name="Berman B.P."/>
            <person name="Bhandari D."/>
            <person name="Bolshakov S."/>
            <person name="Borkova D."/>
            <person name="Botchan M.R."/>
            <person name="Bouck J."/>
            <person name="Brokstein P."/>
            <person name="Brottier P."/>
            <person name="Burtis K.C."/>
            <person name="Busam D.A."/>
            <person name="Butler H."/>
            <person name="Cadieu E."/>
            <person name="Center A."/>
            <person name="Chandra I."/>
            <person name="Cherry J.M."/>
            <person name="Cawley S."/>
            <person name="Dahlke C."/>
            <person name="Davenport L.B."/>
            <person name="Davies P."/>
            <person name="de Pablos B."/>
            <person name="Delcher A."/>
            <person name="Deng Z."/>
            <person name="Mays A.D."/>
            <person name="Dew I."/>
            <person name="Dietz S.M."/>
            <person name="Dodson K."/>
            <person name="Doup L.E."/>
            <person name="Downes M."/>
            <person name="Dugan-Rocha S."/>
            <person name="Dunkov B.C."/>
            <person name="Dunn P."/>
            <person name="Durbin K.J."/>
            <person name="Evangelista C.C."/>
            <person name="Ferraz C."/>
            <person name="Ferriera S."/>
            <person name="Fleischmann W."/>
            <person name="Fosler C."/>
            <person name="Gabrielian A.E."/>
            <person name="Garg N.S."/>
            <person name="Gelbart W.M."/>
            <person name="Glasser K."/>
            <person name="Glodek A."/>
            <person name="Gong F."/>
            <person name="Gorrell J.H."/>
            <person name="Gu Z."/>
            <person name="Guan P."/>
            <person name="Harris M."/>
            <person name="Harris N.L."/>
            <person name="Harvey D.A."/>
            <person name="Heiman T.J."/>
            <person name="Hernandez J.R."/>
            <person name="Houck J."/>
            <person name="Hostin D."/>
            <person name="Houston K.A."/>
            <person name="Howland T.J."/>
            <person name="Wei M.-H."/>
            <person name="Ibegwam C."/>
            <person name="Jalali M."/>
            <person name="Kalush F."/>
            <person name="Karpen G.H."/>
            <person name="Ke Z."/>
            <person name="Kennison J.A."/>
            <person name="Ketchum K.A."/>
            <person name="Kimmel B.E."/>
            <person name="Kodira C.D."/>
            <person name="Kraft C.L."/>
            <person name="Kravitz S."/>
            <person name="Kulp D."/>
            <person name="Lai Z."/>
            <person name="Lasko P."/>
            <person name="Lei Y."/>
            <person name="Levitsky A.A."/>
            <person name="Li J.H."/>
            <person name="Li Z."/>
            <person name="Liang Y."/>
            <person name="Lin X."/>
            <person name="Liu X."/>
            <person name="Mattei B."/>
            <person name="McIntosh T.C."/>
            <person name="McLeod M.P."/>
            <person name="McPherson D."/>
            <person name="Merkulov G."/>
            <person name="Milshina N.V."/>
            <person name="Mobarry C."/>
            <person name="Morris J."/>
            <person name="Moshrefi A."/>
            <person name="Mount S.M."/>
            <person name="Moy M."/>
            <person name="Murphy B."/>
            <person name="Murphy L."/>
            <person name="Muzny D.M."/>
            <person name="Nelson D.L."/>
            <person name="Nelson D.R."/>
            <person name="Nelson K.A."/>
            <person name="Nixon K."/>
            <person name="Nusskern D.R."/>
            <person name="Pacleb J.M."/>
            <person name="Palazzolo M."/>
            <person name="Pittman G.S."/>
            <person name="Pan S."/>
            <person name="Pollard J."/>
            <person name="Puri V."/>
            <person name="Reese M.G."/>
            <person name="Reinert K."/>
            <person name="Remington K."/>
            <person name="Saunders R.D.C."/>
            <person name="Scheeler F."/>
            <person name="Shen H."/>
            <person name="Shue B.C."/>
            <person name="Siden-Kiamos I."/>
            <person name="Simpson M."/>
            <person name="Skupski M.P."/>
            <person name="Smith T.J."/>
            <person name="Spier E."/>
            <person name="Spradling A.C."/>
            <person name="Stapleton M."/>
            <person name="Strong R."/>
            <person name="Sun E."/>
            <person name="Svirskas R."/>
            <person name="Tector C."/>
            <person name="Turner R."/>
            <person name="Venter E."/>
            <person name="Wang A.H."/>
            <person name="Wang X."/>
            <person name="Wang Z.-Y."/>
            <person name="Wassarman D.A."/>
            <person name="Weinstock G.M."/>
            <person name="Weissenbach J."/>
            <person name="Williams S.M."/>
            <person name="Woodage T."/>
            <person name="Worley K.C."/>
            <person name="Wu D."/>
            <person name="Yang S."/>
            <person name="Yao Q.A."/>
            <person name="Ye J."/>
            <person name="Yeh R.-F."/>
            <person name="Zaveri J.S."/>
            <person name="Zhan M."/>
            <person name="Zhang G."/>
            <person name="Zhao Q."/>
            <person name="Zheng L."/>
            <person name="Zheng X.H."/>
            <person name="Zhong F.N."/>
            <person name="Zhong W."/>
            <person name="Zhou X."/>
            <person name="Zhu S.C."/>
            <person name="Zhu X."/>
            <person name="Smith H.O."/>
            <person name="Gibbs R.A."/>
            <person name="Myers E.W."/>
            <person name="Rubin G.M."/>
            <person name="Venter J.C."/>
        </authorList>
    </citation>
    <scope>NUCLEOTIDE SEQUENCE [LARGE SCALE GENOMIC DNA]</scope>
    <source>
        <strain>Berkeley</strain>
    </source>
</reference>
<reference key="2">
    <citation type="journal article" date="2002" name="Genome Biol.">
        <title>Annotation of the Drosophila melanogaster euchromatic genome: a systematic review.</title>
        <authorList>
            <person name="Misra S."/>
            <person name="Crosby M.A."/>
            <person name="Mungall C.J."/>
            <person name="Matthews B.B."/>
            <person name="Campbell K.S."/>
            <person name="Hradecky P."/>
            <person name="Huang Y."/>
            <person name="Kaminker J.S."/>
            <person name="Millburn G.H."/>
            <person name="Prochnik S.E."/>
            <person name="Smith C.D."/>
            <person name="Tupy J.L."/>
            <person name="Whitfield E.J."/>
            <person name="Bayraktaroglu L."/>
            <person name="Berman B.P."/>
            <person name="Bettencourt B.R."/>
            <person name="Celniker S.E."/>
            <person name="de Grey A.D.N.J."/>
            <person name="Drysdale R.A."/>
            <person name="Harris N.L."/>
            <person name="Richter J."/>
            <person name="Russo S."/>
            <person name="Schroeder A.J."/>
            <person name="Shu S.Q."/>
            <person name="Stapleton M."/>
            <person name="Yamada C."/>
            <person name="Ashburner M."/>
            <person name="Gelbart W.M."/>
            <person name="Rubin G.M."/>
            <person name="Lewis S.E."/>
        </authorList>
    </citation>
    <scope>GENOME REANNOTATION</scope>
    <source>
        <strain>Berkeley</strain>
    </source>
</reference>
<reference key="3">
    <citation type="journal article" date="2002" name="Genome Biol.">
        <title>A Drosophila full-length cDNA resource.</title>
        <authorList>
            <person name="Stapleton M."/>
            <person name="Carlson J.W."/>
            <person name="Brokstein P."/>
            <person name="Yu C."/>
            <person name="Champe M."/>
            <person name="George R.A."/>
            <person name="Guarin H."/>
            <person name="Kronmiller B."/>
            <person name="Pacleb J.M."/>
            <person name="Park S."/>
            <person name="Wan K.H."/>
            <person name="Rubin G.M."/>
            <person name="Celniker S.E."/>
        </authorList>
    </citation>
    <scope>NUCLEOTIDE SEQUENCE [LARGE SCALE MRNA]</scope>
    <source>
        <strain>Berkeley</strain>
        <tissue>Embryo</tissue>
    </source>
</reference>
<keyword id="KW-1185">Reference proteome</keyword>
<gene>
    <name type="ORF">CG4953</name>
</gene>
<comment type="similarity">
    <text evidence="1">Belongs to the TRAPPC13 family.</text>
</comment>
<accession>Q95TN1</accession>
<accession>Q9VL12</accession>
<evidence type="ECO:0000305" key="1"/>
<feature type="chain" id="PRO_0000321556" description="Probable trafficking protein particle complex subunit 13 homolog">
    <location>
        <begin position="1"/>
        <end position="438"/>
    </location>
</feature>
<name>TPC13_DROME</name>
<sequence>MEMVEPDAHLVALKVMRLMRPTLVGLGPVVTCEPTDLVQRFSSSQESDGMSGACAETLAAGQVLLLPQSFGSIYLGETFASYICVHNTTPNPVECVTVKADLQSNTSRINLSMHENAKSPVVLPPGGTIDDVIRYEVKEIGTHILVCEVNYSTPAGYAQSLRKFFKFQVLKPLDVKTKFYNAEIDEIYLEAQIQNVTTSPFCLEKVELDGSEDYSVTPLNTLPNGESVFTVKHMLQPNNSCQFLYCIKPKGDIAKNVDTLRQFNNVGKLDIVWRSNLGEKGRLQTSQLQRLPFECKTLRLEVLDAKNTIKIGTIFTFNCRVTNTSEHPMKLNVRLAAKFSPDSQYTGCADFMLNLLQSGESAEFPLSVCPSKLGLVKITPLVLTNTLQNEQFTIENVVDVFVVNSDYDNDTTTHQNKLIRYESAASCLTQKQVQLQVV</sequence>